<dbReference type="EMBL" id="CR543861">
    <property type="protein sequence ID" value="CAG67367.1"/>
    <property type="molecule type" value="Genomic_DNA"/>
</dbReference>
<dbReference type="RefSeq" id="WP_004920331.1">
    <property type="nucleotide sequence ID" value="NC_005966.1"/>
</dbReference>
<dbReference type="SMR" id="Q6FEZ1"/>
<dbReference type="STRING" id="202950.GCA_001485005_00680"/>
<dbReference type="GeneID" id="45232921"/>
<dbReference type="KEGG" id="aci:ACIAD0425"/>
<dbReference type="eggNOG" id="COG0254">
    <property type="taxonomic scope" value="Bacteria"/>
</dbReference>
<dbReference type="HOGENOM" id="CLU_114306_2_1_6"/>
<dbReference type="OrthoDB" id="9803251at2"/>
<dbReference type="BioCyc" id="ASP62977:ACIAD_RS01965-MONOMER"/>
<dbReference type="Proteomes" id="UP000000430">
    <property type="component" value="Chromosome"/>
</dbReference>
<dbReference type="GO" id="GO:1990904">
    <property type="term" value="C:ribonucleoprotein complex"/>
    <property type="evidence" value="ECO:0007669"/>
    <property type="project" value="UniProtKB-KW"/>
</dbReference>
<dbReference type="GO" id="GO:0005840">
    <property type="term" value="C:ribosome"/>
    <property type="evidence" value="ECO:0007669"/>
    <property type="project" value="UniProtKB-KW"/>
</dbReference>
<dbReference type="GO" id="GO:0003735">
    <property type="term" value="F:structural constituent of ribosome"/>
    <property type="evidence" value="ECO:0007669"/>
    <property type="project" value="InterPro"/>
</dbReference>
<dbReference type="GO" id="GO:0006412">
    <property type="term" value="P:translation"/>
    <property type="evidence" value="ECO:0007669"/>
    <property type="project" value="UniProtKB-UniRule"/>
</dbReference>
<dbReference type="Gene3D" id="4.10.830.30">
    <property type="entry name" value="Ribosomal protein L31"/>
    <property type="match status" value="1"/>
</dbReference>
<dbReference type="HAMAP" id="MF_00502">
    <property type="entry name" value="Ribosomal_bL31_2"/>
    <property type="match status" value="1"/>
</dbReference>
<dbReference type="InterPro" id="IPR034704">
    <property type="entry name" value="Ribosomal_bL28/bL31-like_sf"/>
</dbReference>
<dbReference type="InterPro" id="IPR002150">
    <property type="entry name" value="Ribosomal_bL31"/>
</dbReference>
<dbReference type="InterPro" id="IPR027493">
    <property type="entry name" value="Ribosomal_bL31_B"/>
</dbReference>
<dbReference type="InterPro" id="IPR042105">
    <property type="entry name" value="Ribosomal_bL31_sf"/>
</dbReference>
<dbReference type="NCBIfam" id="TIGR00105">
    <property type="entry name" value="L31"/>
    <property type="match status" value="1"/>
</dbReference>
<dbReference type="NCBIfam" id="NF002462">
    <property type="entry name" value="PRK01678.1"/>
    <property type="match status" value="1"/>
</dbReference>
<dbReference type="PANTHER" id="PTHR33280">
    <property type="entry name" value="50S RIBOSOMAL PROTEIN L31, CHLOROPLASTIC"/>
    <property type="match status" value="1"/>
</dbReference>
<dbReference type="PANTHER" id="PTHR33280:SF1">
    <property type="entry name" value="LARGE RIBOSOMAL SUBUNIT PROTEIN BL31C"/>
    <property type="match status" value="1"/>
</dbReference>
<dbReference type="Pfam" id="PF01197">
    <property type="entry name" value="Ribosomal_L31"/>
    <property type="match status" value="1"/>
</dbReference>
<dbReference type="PRINTS" id="PR01249">
    <property type="entry name" value="RIBOSOMALL31"/>
</dbReference>
<dbReference type="SUPFAM" id="SSF143800">
    <property type="entry name" value="L28p-like"/>
    <property type="match status" value="1"/>
</dbReference>
<dbReference type="PROSITE" id="PS01143">
    <property type="entry name" value="RIBOSOMAL_L31"/>
    <property type="match status" value="1"/>
</dbReference>
<sequence length="82" mass="9581">MRQGIHPEYQQVLFHDTNADAYFIIGSTIQTKQTREYEGKVYPYVTLDISSASHPFYTGEVRQASNEGRVATFNKRFSRFKR</sequence>
<name>RL31B_ACIAD</name>
<feature type="chain" id="PRO_0000173193" description="Large ribosomal subunit protein bL31B">
    <location>
        <begin position="1"/>
        <end position="82"/>
    </location>
</feature>
<comment type="subunit">
    <text evidence="1">Part of the 50S ribosomal subunit.</text>
</comment>
<comment type="similarity">
    <text evidence="1">Belongs to the bacterial ribosomal protein bL31 family. Type B subfamily.</text>
</comment>
<keyword id="KW-0687">Ribonucleoprotein</keyword>
<keyword id="KW-0689">Ribosomal protein</keyword>
<accession>Q6FEZ1</accession>
<evidence type="ECO:0000255" key="1">
    <source>
        <dbReference type="HAMAP-Rule" id="MF_00502"/>
    </source>
</evidence>
<evidence type="ECO:0000305" key="2"/>
<protein>
    <recommendedName>
        <fullName evidence="1">Large ribosomal subunit protein bL31B</fullName>
    </recommendedName>
    <alternativeName>
        <fullName evidence="2">50S ribosomal protein L31 type B</fullName>
    </alternativeName>
</protein>
<organism>
    <name type="scientific">Acinetobacter baylyi (strain ATCC 33305 / BD413 / ADP1)</name>
    <dbReference type="NCBI Taxonomy" id="62977"/>
    <lineage>
        <taxon>Bacteria</taxon>
        <taxon>Pseudomonadati</taxon>
        <taxon>Pseudomonadota</taxon>
        <taxon>Gammaproteobacteria</taxon>
        <taxon>Moraxellales</taxon>
        <taxon>Moraxellaceae</taxon>
        <taxon>Acinetobacter</taxon>
    </lineage>
</organism>
<gene>
    <name evidence="1" type="primary">rpmE2</name>
    <name type="ordered locus">ACIAD0425</name>
</gene>
<reference key="1">
    <citation type="journal article" date="2004" name="Nucleic Acids Res.">
        <title>Unique features revealed by the genome sequence of Acinetobacter sp. ADP1, a versatile and naturally transformation competent bacterium.</title>
        <authorList>
            <person name="Barbe V."/>
            <person name="Vallenet D."/>
            <person name="Fonknechten N."/>
            <person name="Kreimeyer A."/>
            <person name="Oztas S."/>
            <person name="Labarre L."/>
            <person name="Cruveiller S."/>
            <person name="Robert C."/>
            <person name="Duprat S."/>
            <person name="Wincker P."/>
            <person name="Ornston L.N."/>
            <person name="Weissenbach J."/>
            <person name="Marliere P."/>
            <person name="Cohen G.N."/>
            <person name="Medigue C."/>
        </authorList>
    </citation>
    <scope>NUCLEOTIDE SEQUENCE [LARGE SCALE GENOMIC DNA]</scope>
    <source>
        <strain>ATCC 33305 / BD413 / ADP1</strain>
    </source>
</reference>
<proteinExistence type="inferred from homology"/>